<feature type="chain" id="PRO_0000175681" description="Holo-[acyl-carrier-protein] synthase">
    <location>
        <begin position="1"/>
        <end position="119"/>
    </location>
</feature>
<feature type="binding site" evidence="1">
    <location>
        <position position="8"/>
    </location>
    <ligand>
        <name>Mg(2+)</name>
        <dbReference type="ChEBI" id="CHEBI:18420"/>
    </ligand>
</feature>
<feature type="binding site" evidence="1">
    <location>
        <position position="58"/>
    </location>
    <ligand>
        <name>Mg(2+)</name>
        <dbReference type="ChEBI" id="CHEBI:18420"/>
    </ligand>
</feature>
<comment type="function">
    <text evidence="1">Transfers the 4'-phosphopantetheine moiety from coenzyme A to a Ser of acyl-carrier-protein.</text>
</comment>
<comment type="catalytic activity">
    <reaction evidence="1">
        <text>apo-[ACP] + CoA = holo-[ACP] + adenosine 3',5'-bisphosphate + H(+)</text>
        <dbReference type="Rhea" id="RHEA:12068"/>
        <dbReference type="Rhea" id="RHEA-COMP:9685"/>
        <dbReference type="Rhea" id="RHEA-COMP:9690"/>
        <dbReference type="ChEBI" id="CHEBI:15378"/>
        <dbReference type="ChEBI" id="CHEBI:29999"/>
        <dbReference type="ChEBI" id="CHEBI:57287"/>
        <dbReference type="ChEBI" id="CHEBI:58343"/>
        <dbReference type="ChEBI" id="CHEBI:64479"/>
        <dbReference type="EC" id="2.7.8.7"/>
    </reaction>
</comment>
<comment type="cofactor">
    <cofactor evidence="1">
        <name>Mg(2+)</name>
        <dbReference type="ChEBI" id="CHEBI:18420"/>
    </cofactor>
</comment>
<comment type="subcellular location">
    <subcellularLocation>
        <location evidence="1">Cytoplasm</location>
    </subcellularLocation>
</comment>
<comment type="similarity">
    <text evidence="1">Belongs to the P-Pant transferase superfamily. AcpS family.</text>
</comment>
<name>ACPS_OCEIH</name>
<reference key="1">
    <citation type="journal article" date="2002" name="Nucleic Acids Res.">
        <title>Genome sequence of Oceanobacillus iheyensis isolated from the Iheya Ridge and its unexpected adaptive capabilities to extreme environments.</title>
        <authorList>
            <person name="Takami H."/>
            <person name="Takaki Y."/>
            <person name="Uchiyama I."/>
        </authorList>
    </citation>
    <scope>NUCLEOTIDE SEQUENCE [LARGE SCALE GENOMIC DNA]</scope>
    <source>
        <strain>DSM 14371 / CIP 107618 / JCM 11309 / KCTC 3954 / HTE831</strain>
    </source>
</reference>
<accession>Q8ESK9</accession>
<organism>
    <name type="scientific">Oceanobacillus iheyensis (strain DSM 14371 / CIP 107618 / JCM 11309 / KCTC 3954 / HTE831)</name>
    <dbReference type="NCBI Taxonomy" id="221109"/>
    <lineage>
        <taxon>Bacteria</taxon>
        <taxon>Bacillati</taxon>
        <taxon>Bacillota</taxon>
        <taxon>Bacilli</taxon>
        <taxon>Bacillales</taxon>
        <taxon>Bacillaceae</taxon>
        <taxon>Oceanobacillus</taxon>
    </lineage>
</organism>
<evidence type="ECO:0000255" key="1">
    <source>
        <dbReference type="HAMAP-Rule" id="MF_00101"/>
    </source>
</evidence>
<proteinExistence type="inferred from homology"/>
<keyword id="KW-0963">Cytoplasm</keyword>
<keyword id="KW-0275">Fatty acid biosynthesis</keyword>
<keyword id="KW-0276">Fatty acid metabolism</keyword>
<keyword id="KW-0444">Lipid biosynthesis</keyword>
<keyword id="KW-0443">Lipid metabolism</keyword>
<keyword id="KW-0460">Magnesium</keyword>
<keyword id="KW-0479">Metal-binding</keyword>
<keyword id="KW-1185">Reference proteome</keyword>
<keyword id="KW-0808">Transferase</keyword>
<protein>
    <recommendedName>
        <fullName evidence="1">Holo-[acyl-carrier-protein] synthase</fullName>
        <shortName evidence="1">Holo-ACP synthase</shortName>
        <ecNumber evidence="1">2.7.8.7</ecNumber>
    </recommendedName>
    <alternativeName>
        <fullName evidence="1">4'-phosphopantetheinyl transferase AcpS</fullName>
    </alternativeName>
</protein>
<gene>
    <name evidence="1" type="primary">acpS</name>
    <name type="ordered locus">OB0619</name>
</gene>
<sequence>MICGVGIDIIELNRMEALIERNERFIERILTENEQRKFQRLSANRKVEYIAGRFAAKEAFAKAVGTGIGKVSFKDIEIINNDYGAPNMKVKGYNDNVIHLSISHSKTYAVANVVLETRE</sequence>
<dbReference type="EC" id="2.7.8.7" evidence="1"/>
<dbReference type="EMBL" id="BA000028">
    <property type="protein sequence ID" value="BAC12575.1"/>
    <property type="molecule type" value="Genomic_DNA"/>
</dbReference>
<dbReference type="RefSeq" id="WP_011065024.1">
    <property type="nucleotide sequence ID" value="NC_004193.1"/>
</dbReference>
<dbReference type="SMR" id="Q8ESK9"/>
<dbReference type="STRING" id="221109.gene:10732823"/>
<dbReference type="KEGG" id="oih:OB0619"/>
<dbReference type="eggNOG" id="COG0736">
    <property type="taxonomic scope" value="Bacteria"/>
</dbReference>
<dbReference type="HOGENOM" id="CLU_089696_1_2_9"/>
<dbReference type="OrthoDB" id="517356at2"/>
<dbReference type="PhylomeDB" id="Q8ESK9"/>
<dbReference type="Proteomes" id="UP000000822">
    <property type="component" value="Chromosome"/>
</dbReference>
<dbReference type="GO" id="GO:0005737">
    <property type="term" value="C:cytoplasm"/>
    <property type="evidence" value="ECO:0007669"/>
    <property type="project" value="UniProtKB-SubCell"/>
</dbReference>
<dbReference type="GO" id="GO:0008897">
    <property type="term" value="F:holo-[acyl-carrier-protein] synthase activity"/>
    <property type="evidence" value="ECO:0007669"/>
    <property type="project" value="UniProtKB-UniRule"/>
</dbReference>
<dbReference type="GO" id="GO:0000287">
    <property type="term" value="F:magnesium ion binding"/>
    <property type="evidence" value="ECO:0007669"/>
    <property type="project" value="UniProtKB-UniRule"/>
</dbReference>
<dbReference type="GO" id="GO:0006633">
    <property type="term" value="P:fatty acid biosynthetic process"/>
    <property type="evidence" value="ECO:0007669"/>
    <property type="project" value="UniProtKB-UniRule"/>
</dbReference>
<dbReference type="Gene3D" id="3.90.470.20">
    <property type="entry name" value="4'-phosphopantetheinyl transferase domain"/>
    <property type="match status" value="1"/>
</dbReference>
<dbReference type="HAMAP" id="MF_00101">
    <property type="entry name" value="AcpS"/>
    <property type="match status" value="1"/>
</dbReference>
<dbReference type="InterPro" id="IPR008278">
    <property type="entry name" value="4-PPantetheinyl_Trfase_dom"/>
</dbReference>
<dbReference type="InterPro" id="IPR037143">
    <property type="entry name" value="4-PPantetheinyl_Trfase_dom_sf"/>
</dbReference>
<dbReference type="InterPro" id="IPR002582">
    <property type="entry name" value="ACPS"/>
</dbReference>
<dbReference type="InterPro" id="IPR004568">
    <property type="entry name" value="Ppantetheine-prot_Trfase_dom"/>
</dbReference>
<dbReference type="NCBIfam" id="TIGR00516">
    <property type="entry name" value="acpS"/>
    <property type="match status" value="1"/>
</dbReference>
<dbReference type="NCBIfam" id="TIGR00556">
    <property type="entry name" value="pantethn_trn"/>
    <property type="match status" value="1"/>
</dbReference>
<dbReference type="Pfam" id="PF01648">
    <property type="entry name" value="ACPS"/>
    <property type="match status" value="1"/>
</dbReference>
<dbReference type="SUPFAM" id="SSF56214">
    <property type="entry name" value="4'-phosphopantetheinyl transferase"/>
    <property type="match status" value="1"/>
</dbReference>